<accession>Q5BJX5</accession>
<protein>
    <recommendedName>
        <fullName>Protein FAM110B</fullName>
    </recommendedName>
</protein>
<gene>
    <name type="primary">Fam110b</name>
</gene>
<reference key="1">
    <citation type="journal article" date="2004" name="Genome Res.">
        <title>The status, quality, and expansion of the NIH full-length cDNA project: the Mammalian Gene Collection (MGC).</title>
        <authorList>
            <consortium name="The MGC Project Team"/>
        </authorList>
    </citation>
    <scope>NUCLEOTIDE SEQUENCE [LARGE SCALE MRNA]</scope>
    <source>
        <tissue>Ovary</tissue>
    </source>
</reference>
<proteinExistence type="evidence at transcript level"/>
<name>F110B_RAT</name>
<keyword id="KW-0963">Cytoplasm</keyword>
<keyword id="KW-0206">Cytoskeleton</keyword>
<keyword id="KW-0597">Phosphoprotein</keyword>
<keyword id="KW-1185">Reference proteome</keyword>
<comment type="subcellular location">
    <subcellularLocation>
        <location>Cytoplasm</location>
    </subcellularLocation>
    <subcellularLocation>
        <location evidence="1">Cytoplasm</location>
        <location evidence="1">Cytoskeleton</location>
        <location evidence="1">Microtubule organizing center</location>
        <location evidence="1">Centrosome</location>
    </subcellularLocation>
</comment>
<comment type="similarity">
    <text evidence="5">Belongs to the FAM110 family.</text>
</comment>
<dbReference type="EMBL" id="BC091289">
    <property type="protein sequence ID" value="AAH91289.1"/>
    <property type="molecule type" value="mRNA"/>
</dbReference>
<dbReference type="RefSeq" id="NP_001019512.1">
    <property type="nucleotide sequence ID" value="NM_001024341.1"/>
</dbReference>
<dbReference type="RefSeq" id="XP_006237901.1">
    <property type="nucleotide sequence ID" value="XM_006237839.5"/>
</dbReference>
<dbReference type="RefSeq" id="XP_006237902.1">
    <property type="nucleotide sequence ID" value="XM_006237840.5"/>
</dbReference>
<dbReference type="RefSeq" id="XP_006237903.1">
    <property type="nucleotide sequence ID" value="XM_006237841.3"/>
</dbReference>
<dbReference type="RefSeq" id="XP_006237905.1">
    <property type="nucleotide sequence ID" value="XM_006237843.5"/>
</dbReference>
<dbReference type="RefSeq" id="XP_008761774.1">
    <property type="nucleotide sequence ID" value="XM_008763552.2"/>
</dbReference>
<dbReference type="RefSeq" id="XP_008761775.1">
    <property type="nucleotide sequence ID" value="XM_008763553.2"/>
</dbReference>
<dbReference type="RefSeq" id="XP_008761777.1">
    <property type="nucleotide sequence ID" value="XM_008763555.2"/>
</dbReference>
<dbReference type="RefSeq" id="XP_017449056.1">
    <property type="nucleotide sequence ID" value="XM_017593567.1"/>
</dbReference>
<dbReference type="RefSeq" id="XP_017449057.1">
    <property type="nucleotide sequence ID" value="XM_017593568.1"/>
</dbReference>
<dbReference type="RefSeq" id="XP_038966460.1">
    <property type="nucleotide sequence ID" value="XM_039110532.2"/>
</dbReference>
<dbReference type="RefSeq" id="XP_038966462.1">
    <property type="nucleotide sequence ID" value="XM_039110534.2"/>
</dbReference>
<dbReference type="RefSeq" id="XP_038966463.1">
    <property type="nucleotide sequence ID" value="XM_039110535.2"/>
</dbReference>
<dbReference type="RefSeq" id="XP_063144256.1">
    <property type="nucleotide sequence ID" value="XM_063288186.1"/>
</dbReference>
<dbReference type="RefSeq" id="XP_063144257.1">
    <property type="nucleotide sequence ID" value="XM_063288187.1"/>
</dbReference>
<dbReference type="RefSeq" id="XP_063144258.1">
    <property type="nucleotide sequence ID" value="XM_063288188.1"/>
</dbReference>
<dbReference type="FunCoup" id="Q5BJX5">
    <property type="interactions" value="2741"/>
</dbReference>
<dbReference type="STRING" id="10116.ENSRNOP00000012067"/>
<dbReference type="GlyGen" id="Q5BJX5">
    <property type="glycosylation" value="1 site"/>
</dbReference>
<dbReference type="iPTMnet" id="Q5BJX5"/>
<dbReference type="PhosphoSitePlus" id="Q5BJX5"/>
<dbReference type="PaxDb" id="10116-ENSRNOP00000012067"/>
<dbReference type="Ensembl" id="ENSRNOT00000012066.5">
    <property type="protein sequence ID" value="ENSRNOP00000012067.4"/>
    <property type="gene ID" value="ENSRNOG00000009114.5"/>
</dbReference>
<dbReference type="Ensembl" id="ENSRNOT00000094688.1">
    <property type="protein sequence ID" value="ENSRNOP00000078792.1"/>
    <property type="gene ID" value="ENSRNOG00000009114.5"/>
</dbReference>
<dbReference type="Ensembl" id="ENSRNOT00000099345.1">
    <property type="protein sequence ID" value="ENSRNOP00000076802.1"/>
    <property type="gene ID" value="ENSRNOG00000009114.5"/>
</dbReference>
<dbReference type="GeneID" id="500400"/>
<dbReference type="KEGG" id="rno:500400"/>
<dbReference type="UCSC" id="RGD:1563403">
    <property type="organism name" value="rat"/>
</dbReference>
<dbReference type="AGR" id="RGD:1563403"/>
<dbReference type="CTD" id="90362"/>
<dbReference type="RGD" id="1563403">
    <property type="gene designation" value="Fam110b"/>
</dbReference>
<dbReference type="eggNOG" id="ENOG502R37V">
    <property type="taxonomic scope" value="Eukaryota"/>
</dbReference>
<dbReference type="GeneTree" id="ENSGT00950000183056"/>
<dbReference type="HOGENOM" id="CLU_050540_0_0_1"/>
<dbReference type="InParanoid" id="Q5BJX5"/>
<dbReference type="OMA" id="IASMKSP"/>
<dbReference type="OrthoDB" id="60087at9989"/>
<dbReference type="PhylomeDB" id="Q5BJX5"/>
<dbReference type="TreeFam" id="TF330964"/>
<dbReference type="PRO" id="PR:Q5BJX5"/>
<dbReference type="Proteomes" id="UP000002494">
    <property type="component" value="Chromosome 5"/>
</dbReference>
<dbReference type="Bgee" id="ENSRNOG00000009114">
    <property type="expression patterns" value="Expressed in frontal cortex and 19 other cell types or tissues"/>
</dbReference>
<dbReference type="GO" id="GO:0005813">
    <property type="term" value="C:centrosome"/>
    <property type="evidence" value="ECO:0007669"/>
    <property type="project" value="UniProtKB-SubCell"/>
</dbReference>
<dbReference type="GO" id="GO:0005737">
    <property type="term" value="C:cytoplasm"/>
    <property type="evidence" value="ECO:0007669"/>
    <property type="project" value="UniProtKB-SubCell"/>
</dbReference>
<dbReference type="InterPro" id="IPR025740">
    <property type="entry name" value="FAM110"/>
</dbReference>
<dbReference type="InterPro" id="IPR025741">
    <property type="entry name" value="FAM110_C"/>
</dbReference>
<dbReference type="InterPro" id="IPR025739">
    <property type="entry name" value="FAM110_N"/>
</dbReference>
<dbReference type="PANTHER" id="PTHR14758">
    <property type="entry name" value="AGAP005440-PA"/>
    <property type="match status" value="1"/>
</dbReference>
<dbReference type="PANTHER" id="PTHR14758:SF2">
    <property type="entry name" value="PROTEIN FAM110B"/>
    <property type="match status" value="1"/>
</dbReference>
<dbReference type="Pfam" id="PF14160">
    <property type="entry name" value="FAM110_C"/>
    <property type="match status" value="1"/>
</dbReference>
<dbReference type="Pfam" id="PF14161">
    <property type="entry name" value="FAM110_N"/>
    <property type="match status" value="1"/>
</dbReference>
<sequence>MPTETLQTGSMVKPVSPAGTFTSAVPLRILNKGPDYFRRQAEPNPKRLSAVERLEADKAKYVKSQEVINAKQEPVKPAVLAKPPVCPGAKRVLGSPTLKVFGNHAKTESGVQRETLKLEILKNIINSSEGSSSGSGHKHSSRNWPPHRDTTELHRHSFAESLKVYPTPGRGSPQESSSHVSRRLLEQSAESFLHVSHSSSDIRKVTSVKPLKAIPCSSSAPPLPPKPKVAAMKSPDADQVEPACGVSRRPSLQRSKSDLSDRYFRVDADVERFFNYCGLDPEELENLGMENFARANSDIISLNFRSASMISSDCEQSQDSNSDLRNDDSANDRVPYGISAIERNARIIKWLYSIKQARESQKVSHV</sequence>
<feature type="chain" id="PRO_0000285654" description="Protein FAM110B">
    <location>
        <begin position="1"/>
        <end position="366"/>
    </location>
</feature>
<feature type="region of interest" description="Disordered" evidence="4">
    <location>
        <begin position="127"/>
        <end position="150"/>
    </location>
</feature>
<feature type="region of interest" description="Disordered" evidence="4">
    <location>
        <begin position="163"/>
        <end position="182"/>
    </location>
</feature>
<feature type="region of interest" description="Disordered" evidence="4">
    <location>
        <begin position="214"/>
        <end position="253"/>
    </location>
</feature>
<feature type="region of interest" description="Disordered" evidence="4">
    <location>
        <begin position="313"/>
        <end position="333"/>
    </location>
</feature>
<feature type="compositionally biased region" description="Basic and acidic residues" evidence="4">
    <location>
        <begin position="322"/>
        <end position="331"/>
    </location>
</feature>
<feature type="modified residue" description="Phosphoserine" evidence="2">
    <location>
        <position position="234"/>
    </location>
</feature>
<feature type="modified residue" description="Phosphoserine" evidence="3">
    <location>
        <position position="297"/>
    </location>
</feature>
<evidence type="ECO:0000250" key="1"/>
<evidence type="ECO:0000250" key="2">
    <source>
        <dbReference type="UniProtKB" id="Q8C739"/>
    </source>
</evidence>
<evidence type="ECO:0000250" key="3">
    <source>
        <dbReference type="UniProtKB" id="Q8TC76"/>
    </source>
</evidence>
<evidence type="ECO:0000256" key="4">
    <source>
        <dbReference type="SAM" id="MobiDB-lite"/>
    </source>
</evidence>
<evidence type="ECO:0000305" key="5"/>
<organism>
    <name type="scientific">Rattus norvegicus</name>
    <name type="common">Rat</name>
    <dbReference type="NCBI Taxonomy" id="10116"/>
    <lineage>
        <taxon>Eukaryota</taxon>
        <taxon>Metazoa</taxon>
        <taxon>Chordata</taxon>
        <taxon>Craniata</taxon>
        <taxon>Vertebrata</taxon>
        <taxon>Euteleostomi</taxon>
        <taxon>Mammalia</taxon>
        <taxon>Eutheria</taxon>
        <taxon>Euarchontoglires</taxon>
        <taxon>Glires</taxon>
        <taxon>Rodentia</taxon>
        <taxon>Myomorpha</taxon>
        <taxon>Muroidea</taxon>
        <taxon>Muridae</taxon>
        <taxon>Murinae</taxon>
        <taxon>Rattus</taxon>
    </lineage>
</organism>